<comment type="function">
    <text evidence="1">This protein binds specifically to 23S rRNA; its binding is stimulated by other ribosomal proteins, e.g. L4, L17, and L20. It is important during the early stages of 50S assembly. It makes multiple contacts with different domains of the 23S rRNA in the assembled 50S subunit and ribosome (By similarity).</text>
</comment>
<comment type="function">
    <text evidence="1">The globular domain of the protein is located near the polypeptide exit tunnel on the outside of the subunit, while an extended beta-hairpin is found that lines the wall of the exit tunnel in the center of the 70S ribosome.</text>
</comment>
<comment type="subunit">
    <text evidence="1">Part of the 50S ribosomal subunit.</text>
</comment>
<comment type="similarity">
    <text evidence="1">Belongs to the universal ribosomal protein uL22 family.</text>
</comment>
<reference key="1">
    <citation type="submission" date="2006-08" db="EMBL/GenBank/DDBJ databases">
        <title>Complete sequence of Alkalilimnicola ehrilichei MLHE-1.</title>
        <authorList>
            <person name="Copeland A."/>
            <person name="Lucas S."/>
            <person name="Lapidus A."/>
            <person name="Barry K."/>
            <person name="Detter J.C."/>
            <person name="Glavina del Rio T."/>
            <person name="Hammon N."/>
            <person name="Israni S."/>
            <person name="Dalin E."/>
            <person name="Tice H."/>
            <person name="Pitluck S."/>
            <person name="Sims D."/>
            <person name="Brettin T."/>
            <person name="Bruce D."/>
            <person name="Han C."/>
            <person name="Tapia R."/>
            <person name="Gilna P."/>
            <person name="Schmutz J."/>
            <person name="Larimer F."/>
            <person name="Land M."/>
            <person name="Hauser L."/>
            <person name="Kyrpides N."/>
            <person name="Mikhailova N."/>
            <person name="Oremland R.S."/>
            <person name="Hoeft S.E."/>
            <person name="Switzer-Blum J."/>
            <person name="Kulp T."/>
            <person name="King G."/>
            <person name="Tabita R."/>
            <person name="Witte B."/>
            <person name="Santini J.M."/>
            <person name="Basu P."/>
            <person name="Hollibaugh J.T."/>
            <person name="Xie G."/>
            <person name="Stolz J.F."/>
            <person name="Richardson P."/>
        </authorList>
    </citation>
    <scope>NUCLEOTIDE SEQUENCE [LARGE SCALE GENOMIC DNA]</scope>
    <source>
        <strain>ATCC BAA-1101 / DSM 17681 / MLHE-1</strain>
    </source>
</reference>
<proteinExistence type="inferred from homology"/>
<keyword id="KW-1185">Reference proteome</keyword>
<keyword id="KW-0687">Ribonucleoprotein</keyword>
<keyword id="KW-0689">Ribosomal protein</keyword>
<keyword id="KW-0694">RNA-binding</keyword>
<keyword id="KW-0699">rRNA-binding</keyword>
<sequence>METSAKLKFSRLSPQKARLVADQVRGLPVEKALEILEFSPKKAAAIVRKVLDSAVANAEHNDGADIDALRVARIFVDEGPMLKRIRPRAKGRANRILKRTSHITVTVAEQQ</sequence>
<organism>
    <name type="scientific">Alkalilimnicola ehrlichii (strain ATCC BAA-1101 / DSM 17681 / MLHE-1)</name>
    <dbReference type="NCBI Taxonomy" id="187272"/>
    <lineage>
        <taxon>Bacteria</taxon>
        <taxon>Pseudomonadati</taxon>
        <taxon>Pseudomonadota</taxon>
        <taxon>Gammaproteobacteria</taxon>
        <taxon>Chromatiales</taxon>
        <taxon>Ectothiorhodospiraceae</taxon>
        <taxon>Alkalilimnicola</taxon>
    </lineage>
</organism>
<feature type="chain" id="PRO_1000052535" description="Large ribosomal subunit protein uL22">
    <location>
        <begin position="1"/>
        <end position="111"/>
    </location>
</feature>
<protein>
    <recommendedName>
        <fullName evidence="1">Large ribosomal subunit protein uL22</fullName>
    </recommendedName>
    <alternativeName>
        <fullName evidence="2">50S ribosomal protein L22</fullName>
    </alternativeName>
</protein>
<name>RL22_ALKEH</name>
<evidence type="ECO:0000255" key="1">
    <source>
        <dbReference type="HAMAP-Rule" id="MF_01331"/>
    </source>
</evidence>
<evidence type="ECO:0000305" key="2"/>
<gene>
    <name evidence="1" type="primary">rplV</name>
    <name type="ordered locus">Mlg_0463</name>
</gene>
<accession>Q0ABH0</accession>
<dbReference type="EMBL" id="CP000453">
    <property type="protein sequence ID" value="ABI55817.1"/>
    <property type="molecule type" value="Genomic_DNA"/>
</dbReference>
<dbReference type="RefSeq" id="WP_011628212.1">
    <property type="nucleotide sequence ID" value="NC_008340.1"/>
</dbReference>
<dbReference type="SMR" id="Q0ABH0"/>
<dbReference type="KEGG" id="aeh:Mlg_0463"/>
<dbReference type="eggNOG" id="COG0091">
    <property type="taxonomic scope" value="Bacteria"/>
</dbReference>
<dbReference type="HOGENOM" id="CLU_083987_3_3_6"/>
<dbReference type="OrthoDB" id="9805969at2"/>
<dbReference type="Proteomes" id="UP000001962">
    <property type="component" value="Chromosome"/>
</dbReference>
<dbReference type="GO" id="GO:0022625">
    <property type="term" value="C:cytosolic large ribosomal subunit"/>
    <property type="evidence" value="ECO:0007669"/>
    <property type="project" value="TreeGrafter"/>
</dbReference>
<dbReference type="GO" id="GO:0019843">
    <property type="term" value="F:rRNA binding"/>
    <property type="evidence" value="ECO:0007669"/>
    <property type="project" value="UniProtKB-UniRule"/>
</dbReference>
<dbReference type="GO" id="GO:0003735">
    <property type="term" value="F:structural constituent of ribosome"/>
    <property type="evidence" value="ECO:0007669"/>
    <property type="project" value="InterPro"/>
</dbReference>
<dbReference type="GO" id="GO:0006412">
    <property type="term" value="P:translation"/>
    <property type="evidence" value="ECO:0007669"/>
    <property type="project" value="UniProtKB-UniRule"/>
</dbReference>
<dbReference type="CDD" id="cd00336">
    <property type="entry name" value="Ribosomal_L22"/>
    <property type="match status" value="1"/>
</dbReference>
<dbReference type="FunFam" id="3.90.470.10:FF:000001">
    <property type="entry name" value="50S ribosomal protein L22"/>
    <property type="match status" value="1"/>
</dbReference>
<dbReference type="Gene3D" id="3.90.470.10">
    <property type="entry name" value="Ribosomal protein L22/L17"/>
    <property type="match status" value="1"/>
</dbReference>
<dbReference type="HAMAP" id="MF_01331_B">
    <property type="entry name" value="Ribosomal_uL22_B"/>
    <property type="match status" value="1"/>
</dbReference>
<dbReference type="InterPro" id="IPR001063">
    <property type="entry name" value="Ribosomal_uL22"/>
</dbReference>
<dbReference type="InterPro" id="IPR005727">
    <property type="entry name" value="Ribosomal_uL22_bac/chlpt-type"/>
</dbReference>
<dbReference type="InterPro" id="IPR047867">
    <property type="entry name" value="Ribosomal_uL22_bac/org-type"/>
</dbReference>
<dbReference type="InterPro" id="IPR018260">
    <property type="entry name" value="Ribosomal_uL22_CS"/>
</dbReference>
<dbReference type="InterPro" id="IPR036394">
    <property type="entry name" value="Ribosomal_uL22_sf"/>
</dbReference>
<dbReference type="NCBIfam" id="TIGR01044">
    <property type="entry name" value="rplV_bact"/>
    <property type="match status" value="1"/>
</dbReference>
<dbReference type="PANTHER" id="PTHR13501">
    <property type="entry name" value="CHLOROPLAST 50S RIBOSOMAL PROTEIN L22-RELATED"/>
    <property type="match status" value="1"/>
</dbReference>
<dbReference type="PANTHER" id="PTHR13501:SF8">
    <property type="entry name" value="LARGE RIBOSOMAL SUBUNIT PROTEIN UL22M"/>
    <property type="match status" value="1"/>
</dbReference>
<dbReference type="Pfam" id="PF00237">
    <property type="entry name" value="Ribosomal_L22"/>
    <property type="match status" value="1"/>
</dbReference>
<dbReference type="SUPFAM" id="SSF54843">
    <property type="entry name" value="Ribosomal protein L22"/>
    <property type="match status" value="1"/>
</dbReference>
<dbReference type="PROSITE" id="PS00464">
    <property type="entry name" value="RIBOSOMAL_L22"/>
    <property type="match status" value="1"/>
</dbReference>